<gene>
    <name type="primary">Kcnmb2</name>
</gene>
<reference key="1">
    <citation type="submission" date="2001-11" db="EMBL/GenBank/DDBJ databases">
        <title>Mouse kcnmb2 subunit of the large conductance calcium-activated K channel (MaxiK, BK).</title>
        <authorList>
            <person name="Garcia-Valdes J."/>
            <person name="Eghbali M."/>
            <person name="Stefani E."/>
            <person name="Toro L."/>
        </authorList>
    </citation>
    <scope>NUCLEOTIDE SEQUENCE [MRNA]</scope>
    <source>
        <strain>C57BL/6J</strain>
        <tissue>Kidney</tissue>
    </source>
</reference>
<reference key="2">
    <citation type="journal article" date="2005" name="Science">
        <title>The transcriptional landscape of the mammalian genome.</title>
        <authorList>
            <person name="Carninci P."/>
            <person name="Kasukawa T."/>
            <person name="Katayama S."/>
            <person name="Gough J."/>
            <person name="Frith M.C."/>
            <person name="Maeda N."/>
            <person name="Oyama R."/>
            <person name="Ravasi T."/>
            <person name="Lenhard B."/>
            <person name="Wells C."/>
            <person name="Kodzius R."/>
            <person name="Shimokawa K."/>
            <person name="Bajic V.B."/>
            <person name="Brenner S.E."/>
            <person name="Batalov S."/>
            <person name="Forrest A.R."/>
            <person name="Zavolan M."/>
            <person name="Davis M.J."/>
            <person name="Wilming L.G."/>
            <person name="Aidinis V."/>
            <person name="Allen J.E."/>
            <person name="Ambesi-Impiombato A."/>
            <person name="Apweiler R."/>
            <person name="Aturaliya R.N."/>
            <person name="Bailey T.L."/>
            <person name="Bansal M."/>
            <person name="Baxter L."/>
            <person name="Beisel K.W."/>
            <person name="Bersano T."/>
            <person name="Bono H."/>
            <person name="Chalk A.M."/>
            <person name="Chiu K.P."/>
            <person name="Choudhary V."/>
            <person name="Christoffels A."/>
            <person name="Clutterbuck D.R."/>
            <person name="Crowe M.L."/>
            <person name="Dalla E."/>
            <person name="Dalrymple B.P."/>
            <person name="de Bono B."/>
            <person name="Della Gatta G."/>
            <person name="di Bernardo D."/>
            <person name="Down T."/>
            <person name="Engstrom P."/>
            <person name="Fagiolini M."/>
            <person name="Faulkner G."/>
            <person name="Fletcher C.F."/>
            <person name="Fukushima T."/>
            <person name="Furuno M."/>
            <person name="Futaki S."/>
            <person name="Gariboldi M."/>
            <person name="Georgii-Hemming P."/>
            <person name="Gingeras T.R."/>
            <person name="Gojobori T."/>
            <person name="Green R.E."/>
            <person name="Gustincich S."/>
            <person name="Harbers M."/>
            <person name="Hayashi Y."/>
            <person name="Hensch T.K."/>
            <person name="Hirokawa N."/>
            <person name="Hill D."/>
            <person name="Huminiecki L."/>
            <person name="Iacono M."/>
            <person name="Ikeo K."/>
            <person name="Iwama A."/>
            <person name="Ishikawa T."/>
            <person name="Jakt M."/>
            <person name="Kanapin A."/>
            <person name="Katoh M."/>
            <person name="Kawasawa Y."/>
            <person name="Kelso J."/>
            <person name="Kitamura H."/>
            <person name="Kitano H."/>
            <person name="Kollias G."/>
            <person name="Krishnan S.P."/>
            <person name="Kruger A."/>
            <person name="Kummerfeld S.K."/>
            <person name="Kurochkin I.V."/>
            <person name="Lareau L.F."/>
            <person name="Lazarevic D."/>
            <person name="Lipovich L."/>
            <person name="Liu J."/>
            <person name="Liuni S."/>
            <person name="McWilliam S."/>
            <person name="Madan Babu M."/>
            <person name="Madera M."/>
            <person name="Marchionni L."/>
            <person name="Matsuda H."/>
            <person name="Matsuzawa S."/>
            <person name="Miki H."/>
            <person name="Mignone F."/>
            <person name="Miyake S."/>
            <person name="Morris K."/>
            <person name="Mottagui-Tabar S."/>
            <person name="Mulder N."/>
            <person name="Nakano N."/>
            <person name="Nakauchi H."/>
            <person name="Ng P."/>
            <person name="Nilsson R."/>
            <person name="Nishiguchi S."/>
            <person name="Nishikawa S."/>
            <person name="Nori F."/>
            <person name="Ohara O."/>
            <person name="Okazaki Y."/>
            <person name="Orlando V."/>
            <person name="Pang K.C."/>
            <person name="Pavan W.J."/>
            <person name="Pavesi G."/>
            <person name="Pesole G."/>
            <person name="Petrovsky N."/>
            <person name="Piazza S."/>
            <person name="Reed J."/>
            <person name="Reid J.F."/>
            <person name="Ring B.Z."/>
            <person name="Ringwald M."/>
            <person name="Rost B."/>
            <person name="Ruan Y."/>
            <person name="Salzberg S.L."/>
            <person name="Sandelin A."/>
            <person name="Schneider C."/>
            <person name="Schoenbach C."/>
            <person name="Sekiguchi K."/>
            <person name="Semple C.A."/>
            <person name="Seno S."/>
            <person name="Sessa L."/>
            <person name="Sheng Y."/>
            <person name="Shibata Y."/>
            <person name="Shimada H."/>
            <person name="Shimada K."/>
            <person name="Silva D."/>
            <person name="Sinclair B."/>
            <person name="Sperling S."/>
            <person name="Stupka E."/>
            <person name="Sugiura K."/>
            <person name="Sultana R."/>
            <person name="Takenaka Y."/>
            <person name="Taki K."/>
            <person name="Tammoja K."/>
            <person name="Tan S.L."/>
            <person name="Tang S."/>
            <person name="Taylor M.S."/>
            <person name="Tegner J."/>
            <person name="Teichmann S.A."/>
            <person name="Ueda H.R."/>
            <person name="van Nimwegen E."/>
            <person name="Verardo R."/>
            <person name="Wei C.L."/>
            <person name="Yagi K."/>
            <person name="Yamanishi H."/>
            <person name="Zabarovsky E."/>
            <person name="Zhu S."/>
            <person name="Zimmer A."/>
            <person name="Hide W."/>
            <person name="Bult C."/>
            <person name="Grimmond S.M."/>
            <person name="Teasdale R.D."/>
            <person name="Liu E.T."/>
            <person name="Brusic V."/>
            <person name="Quackenbush J."/>
            <person name="Wahlestedt C."/>
            <person name="Mattick J.S."/>
            <person name="Hume D.A."/>
            <person name="Kai C."/>
            <person name="Sasaki D."/>
            <person name="Tomaru Y."/>
            <person name="Fukuda S."/>
            <person name="Kanamori-Katayama M."/>
            <person name="Suzuki M."/>
            <person name="Aoki J."/>
            <person name="Arakawa T."/>
            <person name="Iida J."/>
            <person name="Imamura K."/>
            <person name="Itoh M."/>
            <person name="Kato T."/>
            <person name="Kawaji H."/>
            <person name="Kawagashira N."/>
            <person name="Kawashima T."/>
            <person name="Kojima M."/>
            <person name="Kondo S."/>
            <person name="Konno H."/>
            <person name="Nakano K."/>
            <person name="Ninomiya N."/>
            <person name="Nishio T."/>
            <person name="Okada M."/>
            <person name="Plessy C."/>
            <person name="Shibata K."/>
            <person name="Shiraki T."/>
            <person name="Suzuki S."/>
            <person name="Tagami M."/>
            <person name="Waki K."/>
            <person name="Watahiki A."/>
            <person name="Okamura-Oho Y."/>
            <person name="Suzuki H."/>
            <person name="Kawai J."/>
            <person name="Hayashizaki Y."/>
        </authorList>
    </citation>
    <scope>NUCLEOTIDE SEQUENCE [LARGE SCALE MRNA]</scope>
    <source>
        <strain>C57BL/6J</strain>
        <tissue>Embryo</tissue>
    </source>
</reference>
<reference key="3">
    <citation type="journal article" date="2004" name="Genome Res.">
        <title>The status, quality, and expansion of the NIH full-length cDNA project: the Mammalian Gene Collection (MGC).</title>
        <authorList>
            <consortium name="The MGC Project Team"/>
        </authorList>
    </citation>
    <scope>NUCLEOTIDE SEQUENCE [LARGE SCALE MRNA]</scope>
    <source>
        <strain>C57BL/6J</strain>
        <tissue>Brain</tissue>
    </source>
</reference>
<proteinExistence type="evidence at transcript level"/>
<organism>
    <name type="scientific">Mus musculus</name>
    <name type="common">Mouse</name>
    <dbReference type="NCBI Taxonomy" id="10090"/>
    <lineage>
        <taxon>Eukaryota</taxon>
        <taxon>Metazoa</taxon>
        <taxon>Chordata</taxon>
        <taxon>Craniata</taxon>
        <taxon>Vertebrata</taxon>
        <taxon>Euteleostomi</taxon>
        <taxon>Mammalia</taxon>
        <taxon>Eutheria</taxon>
        <taxon>Euarchontoglires</taxon>
        <taxon>Glires</taxon>
        <taxon>Rodentia</taxon>
        <taxon>Myomorpha</taxon>
        <taxon>Muroidea</taxon>
        <taxon>Muridae</taxon>
        <taxon>Murinae</taxon>
        <taxon>Mus</taxon>
        <taxon>Mus</taxon>
    </lineage>
</organism>
<sequence>MFIWTSGRTSSSYRQDEKRNIYQKIRDHDLLDKRKTVTALKAGEDRAILLGLAMMVCSIMMYFLLGITLLRSYMQSVWTEEAQCALLNVSITETFNCSFSCGPDCWKLSQYPCLQVYVNLTSSGERLLLYHTEETMKINQKCSYIPKCGNNFEESMSLVSVVMENFRRHQHFPCYSDPEGNQKSVILTKLYSSNVLFHSLFWPTCMMAGGVAIVAMVKLTQYLSLLCERIQRINR</sequence>
<accession>Q9CZM9</accession>
<feature type="chain" id="PRO_0000187052" description="Calcium-activated potassium channel subunit beta-2">
    <location>
        <begin position="1"/>
        <end position="235"/>
    </location>
</feature>
<feature type="topological domain" description="Cytoplasmic" evidence="2">
    <location>
        <begin position="1"/>
        <end position="46"/>
    </location>
</feature>
<feature type="transmembrane region" description="Helical; Name=1" evidence="2">
    <location>
        <begin position="47"/>
        <end position="67"/>
    </location>
</feature>
<feature type="topological domain" description="Extracellular" evidence="2">
    <location>
        <begin position="68"/>
        <end position="194"/>
    </location>
</feature>
<feature type="transmembrane region" description="Helical; Name=2" evidence="2">
    <location>
        <begin position="195"/>
        <end position="215"/>
    </location>
</feature>
<feature type="topological domain" description="Cytoplasmic" evidence="2">
    <location>
        <begin position="216"/>
        <end position="235"/>
    </location>
</feature>
<feature type="region of interest" description="Ball and chain">
    <location>
        <begin position="1"/>
        <end position="45"/>
    </location>
</feature>
<feature type="glycosylation site" description="N-linked (GlcNAc...) asparagine" evidence="2">
    <location>
        <position position="88"/>
    </location>
</feature>
<feature type="glycosylation site" description="N-linked (GlcNAc...) asparagine" evidence="2">
    <location>
        <position position="96"/>
    </location>
</feature>
<feature type="glycosylation site" description="N-linked (GlcNAc...) asparagine" evidence="2">
    <location>
        <position position="119"/>
    </location>
</feature>
<dbReference type="EMBL" id="AY062429">
    <property type="protein sequence ID" value="AAL38982.1"/>
    <property type="molecule type" value="mRNA"/>
</dbReference>
<dbReference type="EMBL" id="AK012400">
    <property type="protein sequence ID" value="BAB28216.1"/>
    <property type="molecule type" value="mRNA"/>
</dbReference>
<dbReference type="EMBL" id="BC046227">
    <property type="protein sequence ID" value="AAH46227.1"/>
    <property type="molecule type" value="mRNA"/>
</dbReference>
<dbReference type="EMBL" id="BC058957">
    <property type="protein sequence ID" value="AAH58957.1"/>
    <property type="molecule type" value="mRNA"/>
</dbReference>
<dbReference type="CCDS" id="CCDS17292.1"/>
<dbReference type="RefSeq" id="NP_001416104.1">
    <property type="nucleotide sequence ID" value="NM_001429175.1"/>
</dbReference>
<dbReference type="RefSeq" id="NP_082507.1">
    <property type="nucleotide sequence ID" value="NM_028231.3"/>
</dbReference>
<dbReference type="RefSeq" id="XP_006535612.1">
    <property type="nucleotide sequence ID" value="XM_006535549.3"/>
</dbReference>
<dbReference type="RefSeq" id="XP_006535613.1">
    <property type="nucleotide sequence ID" value="XM_006535550.3"/>
</dbReference>
<dbReference type="RefSeq" id="XP_006535614.1">
    <property type="nucleotide sequence ID" value="XM_006535551.4"/>
</dbReference>
<dbReference type="RefSeq" id="XP_017175231.1">
    <property type="nucleotide sequence ID" value="XM_017319742.3"/>
</dbReference>
<dbReference type="RefSeq" id="XP_036019243.1">
    <property type="nucleotide sequence ID" value="XM_036163350.1"/>
</dbReference>
<dbReference type="BMRB" id="Q9CZM9"/>
<dbReference type="SMR" id="Q9CZM9"/>
<dbReference type="FunCoup" id="Q9CZM9">
    <property type="interactions" value="575"/>
</dbReference>
<dbReference type="STRING" id="10090.ENSMUSP00000113234"/>
<dbReference type="GlyCosmos" id="Q9CZM9">
    <property type="glycosylation" value="3 sites, No reported glycans"/>
</dbReference>
<dbReference type="GlyGen" id="Q9CZM9">
    <property type="glycosylation" value="3 sites"/>
</dbReference>
<dbReference type="PhosphoSitePlus" id="Q9CZM9"/>
<dbReference type="PaxDb" id="10090-ENSMUSP00000113234"/>
<dbReference type="ProteomicsDB" id="263591"/>
<dbReference type="ABCD" id="Q9CZM9">
    <property type="antibodies" value="1 sequenced antibody"/>
</dbReference>
<dbReference type="DNASU" id="72413"/>
<dbReference type="Ensembl" id="ENSMUST00000119310.8">
    <property type="protein sequence ID" value="ENSMUSP00000112531.2"/>
    <property type="gene ID" value="ENSMUSG00000037610.17"/>
</dbReference>
<dbReference type="Ensembl" id="ENSMUST00000119970.8">
    <property type="protein sequence ID" value="ENSMUSP00000113234.2"/>
    <property type="gene ID" value="ENSMUSG00000037610.17"/>
</dbReference>
<dbReference type="Ensembl" id="ENSMUST00000192429.6">
    <property type="protein sequence ID" value="ENSMUSP00000141656.2"/>
    <property type="gene ID" value="ENSMUSG00000037610.17"/>
</dbReference>
<dbReference type="GeneID" id="72413"/>
<dbReference type="KEGG" id="mmu:72413"/>
<dbReference type="UCSC" id="uc008owa.1">
    <property type="organism name" value="mouse"/>
</dbReference>
<dbReference type="AGR" id="MGI:1919663"/>
<dbReference type="CTD" id="10242"/>
<dbReference type="MGI" id="MGI:1919663">
    <property type="gene designation" value="Kcnmb2"/>
</dbReference>
<dbReference type="VEuPathDB" id="HostDB:ENSMUSG00000037610"/>
<dbReference type="eggNOG" id="ENOG502QSCP">
    <property type="taxonomic scope" value="Eukaryota"/>
</dbReference>
<dbReference type="GeneTree" id="ENSGT00950000183039"/>
<dbReference type="HOGENOM" id="CLU_085739_1_1_1"/>
<dbReference type="InParanoid" id="Q9CZM9"/>
<dbReference type="OMA" id="ACYSDPE"/>
<dbReference type="OrthoDB" id="5962477at2759"/>
<dbReference type="PhylomeDB" id="Q9CZM9"/>
<dbReference type="TreeFam" id="TF328589"/>
<dbReference type="Reactome" id="R-MMU-1296052">
    <property type="pathway name" value="Ca2+ activated K+ channels"/>
</dbReference>
<dbReference type="BioGRID-ORCS" id="72413">
    <property type="hits" value="1 hit in 77 CRISPR screens"/>
</dbReference>
<dbReference type="ChiTaRS" id="Kcnmb2">
    <property type="organism name" value="mouse"/>
</dbReference>
<dbReference type="PRO" id="PR:Q9CZM9"/>
<dbReference type="Proteomes" id="UP000000589">
    <property type="component" value="Chromosome 3"/>
</dbReference>
<dbReference type="RNAct" id="Q9CZM9">
    <property type="molecule type" value="protein"/>
</dbReference>
<dbReference type="Bgee" id="ENSMUSG00000037610">
    <property type="expression patterns" value="Expressed in trigeminal ganglion and 98 other cell types or tissues"/>
</dbReference>
<dbReference type="ExpressionAtlas" id="Q9CZM9">
    <property type="expression patterns" value="baseline and differential"/>
</dbReference>
<dbReference type="GO" id="GO:0008076">
    <property type="term" value="C:voltage-gated potassium channel complex"/>
    <property type="evidence" value="ECO:0007669"/>
    <property type="project" value="Ensembl"/>
</dbReference>
<dbReference type="GO" id="GO:0015269">
    <property type="term" value="F:calcium-activated potassium channel activity"/>
    <property type="evidence" value="ECO:0007669"/>
    <property type="project" value="Ensembl"/>
</dbReference>
<dbReference type="GO" id="GO:0005513">
    <property type="term" value="P:detection of calcium ion"/>
    <property type="evidence" value="ECO:0007669"/>
    <property type="project" value="Ensembl"/>
</dbReference>
<dbReference type="GO" id="GO:0019228">
    <property type="term" value="P:neuronal action potential"/>
    <property type="evidence" value="ECO:0007669"/>
    <property type="project" value="Ensembl"/>
</dbReference>
<dbReference type="FunFam" id="4.10.81.20:FF:000001">
    <property type="entry name" value="Calcium-activated potassium channel beta 2 subunit"/>
    <property type="match status" value="1"/>
</dbReference>
<dbReference type="Gene3D" id="4.10.81.20">
    <property type="entry name" value="KCNMB2, ball/chain domain"/>
    <property type="match status" value="1"/>
</dbReference>
<dbReference type="InterPro" id="IPR003930">
    <property type="entry name" value="K_chnl_Ca-activ_BK_bsu"/>
</dbReference>
<dbReference type="InterPro" id="IPR037096">
    <property type="entry name" value="KCNMB2_ball/chain_dom_sf"/>
</dbReference>
<dbReference type="InterPro" id="IPR015382">
    <property type="entry name" value="KCNMB2_ball_chain_dom"/>
</dbReference>
<dbReference type="PANTHER" id="PTHR10258">
    <property type="entry name" value="CALCIUM-ACTIVATED POTASSIUM CHANNEL SUBUNIT BETA"/>
    <property type="match status" value="1"/>
</dbReference>
<dbReference type="PANTHER" id="PTHR10258:SF5">
    <property type="entry name" value="CALCIUM-ACTIVATED POTASSIUM CHANNEL SUBUNIT BETA-2"/>
    <property type="match status" value="1"/>
</dbReference>
<dbReference type="Pfam" id="PF03185">
    <property type="entry name" value="CaKB"/>
    <property type="match status" value="1"/>
</dbReference>
<dbReference type="Pfam" id="PF09303">
    <property type="entry name" value="KcnmB2_inactiv"/>
    <property type="match status" value="1"/>
</dbReference>
<dbReference type="PRINTS" id="PR01450">
    <property type="entry name" value="BKCHANNELB"/>
</dbReference>
<keyword id="KW-0325">Glycoprotein</keyword>
<keyword id="KW-0407">Ion channel</keyword>
<keyword id="KW-0406">Ion transport</keyword>
<keyword id="KW-0472">Membrane</keyword>
<keyword id="KW-1185">Reference proteome</keyword>
<keyword id="KW-0812">Transmembrane</keyword>
<keyword id="KW-1133">Transmembrane helix</keyword>
<keyword id="KW-0813">Transport</keyword>
<name>KCMB2_MOUSE</name>
<comment type="function">
    <text evidence="1">Regulatory subunit of the calcium activated potassium KCNMA1 (maxiK) channel. Modulates the calcium sensitivity and gating kinetics of KCNMA1, thereby contributing to KCNMA1 channel diversity. Acts as a negative regulator that confers rapid and complete inactivation of KCNMA1 channel complex (By similarity).</text>
</comment>
<comment type="subunit">
    <text evidence="1">Interacts with KCNMA1 tetramer. There are probably 4 molecules of KCMNB2 per KCNMA1 tetramer (By similarity).</text>
</comment>
<comment type="subcellular location">
    <subcellularLocation>
        <location evidence="1">Membrane</location>
        <topology evidence="1">Multi-pass membrane protein</topology>
    </subcellularLocation>
</comment>
<comment type="domain">
    <text evidence="1">The ball and chain domain mediates the inactivation of KCNMA1. It occludes the conduction pathway of KCNMA1 channels, and comprises the pore-blocking ball domain (residues 1-17) and the chain domain (residues 20-45) linking it to the transmembrane segment. The ball domain is made up of a flexible N-terminus anchored at a well ordered loop-helix motif. The chain domain consists of a 4-turn helix with an unfolded linker at its C-terminus (By similarity).</text>
</comment>
<comment type="PTM">
    <text evidence="1">N-glycosylated.</text>
</comment>
<comment type="similarity">
    <text evidence="3">Belongs to the KCNMB (TC 8.A.14.1) family. KCNMB2 subfamily.</text>
</comment>
<evidence type="ECO:0000250" key="1"/>
<evidence type="ECO:0000255" key="2"/>
<evidence type="ECO:0000305" key="3"/>
<protein>
    <recommendedName>
        <fullName>Calcium-activated potassium channel subunit beta-2</fullName>
    </recommendedName>
    <alternativeName>
        <fullName>BK channel subunit beta-2</fullName>
        <shortName>BKbeta2</shortName>
    </alternativeName>
    <alternativeName>
        <fullName>Calcium-activated potassium channel, subfamily M subunit beta-2</fullName>
    </alternativeName>
    <alternativeName>
        <fullName>Charybdotoxin receptor subunit beta-2</fullName>
    </alternativeName>
    <alternativeName>
        <fullName>K(VCA)beta-2</fullName>
    </alternativeName>
    <alternativeName>
        <fullName>Maxi K channel subunit beta-2</fullName>
    </alternativeName>
    <alternativeName>
        <fullName>Slo-beta-2</fullName>
    </alternativeName>
</protein>